<feature type="chain" id="PRO_0000237385" description="Glutamate--tRNA ligase">
    <location>
        <begin position="1"/>
        <end position="479"/>
    </location>
</feature>
<feature type="short sequence motif" description="'HIGH' region" evidence="1">
    <location>
        <begin position="9"/>
        <end position="19"/>
    </location>
</feature>
<feature type="short sequence motif" description="'KMSKS' region" evidence="1">
    <location>
        <begin position="248"/>
        <end position="252"/>
    </location>
</feature>
<feature type="binding site" evidence="1">
    <location>
        <position position="251"/>
    </location>
    <ligand>
        <name>ATP</name>
        <dbReference type="ChEBI" id="CHEBI:30616"/>
    </ligand>
</feature>
<protein>
    <recommendedName>
        <fullName evidence="1">Glutamate--tRNA ligase</fullName>
        <ecNumber evidence="1">6.1.1.17</ecNumber>
    </recommendedName>
    <alternativeName>
        <fullName evidence="1">Glutamyl-tRNA synthetase</fullName>
        <shortName evidence="1">GluRS</shortName>
    </alternativeName>
</protein>
<keyword id="KW-0030">Aminoacyl-tRNA synthetase</keyword>
<keyword id="KW-0067">ATP-binding</keyword>
<keyword id="KW-0963">Cytoplasm</keyword>
<keyword id="KW-0436">Ligase</keyword>
<keyword id="KW-0547">Nucleotide-binding</keyword>
<keyword id="KW-0648">Protein biosynthesis</keyword>
<dbReference type="EC" id="6.1.1.17" evidence="1"/>
<dbReference type="EMBL" id="CP000111">
    <property type="protein sequence ID" value="ABB49534.1"/>
    <property type="molecule type" value="Genomic_DNA"/>
</dbReference>
<dbReference type="RefSeq" id="WP_011376033.1">
    <property type="nucleotide sequence ID" value="NC_007577.1"/>
</dbReference>
<dbReference type="SMR" id="Q31C61"/>
<dbReference type="STRING" id="74546.PMT9312_0473"/>
<dbReference type="KEGG" id="pmi:PMT9312_0473"/>
<dbReference type="eggNOG" id="COG0008">
    <property type="taxonomic scope" value="Bacteria"/>
</dbReference>
<dbReference type="HOGENOM" id="CLU_015768_6_0_3"/>
<dbReference type="OrthoDB" id="9807503at2"/>
<dbReference type="Proteomes" id="UP000002715">
    <property type="component" value="Chromosome"/>
</dbReference>
<dbReference type="GO" id="GO:0005829">
    <property type="term" value="C:cytosol"/>
    <property type="evidence" value="ECO:0007669"/>
    <property type="project" value="TreeGrafter"/>
</dbReference>
<dbReference type="GO" id="GO:0005524">
    <property type="term" value="F:ATP binding"/>
    <property type="evidence" value="ECO:0007669"/>
    <property type="project" value="UniProtKB-UniRule"/>
</dbReference>
<dbReference type="GO" id="GO:0004818">
    <property type="term" value="F:glutamate-tRNA ligase activity"/>
    <property type="evidence" value="ECO:0007669"/>
    <property type="project" value="UniProtKB-UniRule"/>
</dbReference>
<dbReference type="GO" id="GO:0000049">
    <property type="term" value="F:tRNA binding"/>
    <property type="evidence" value="ECO:0007669"/>
    <property type="project" value="InterPro"/>
</dbReference>
<dbReference type="GO" id="GO:0008270">
    <property type="term" value="F:zinc ion binding"/>
    <property type="evidence" value="ECO:0007669"/>
    <property type="project" value="InterPro"/>
</dbReference>
<dbReference type="GO" id="GO:0006424">
    <property type="term" value="P:glutamyl-tRNA aminoacylation"/>
    <property type="evidence" value="ECO:0007669"/>
    <property type="project" value="UniProtKB-UniRule"/>
</dbReference>
<dbReference type="CDD" id="cd00808">
    <property type="entry name" value="GluRS_core"/>
    <property type="match status" value="1"/>
</dbReference>
<dbReference type="FunFam" id="3.40.50.620:FF:000007">
    <property type="entry name" value="Glutamate--tRNA ligase"/>
    <property type="match status" value="1"/>
</dbReference>
<dbReference type="Gene3D" id="1.10.10.350">
    <property type="match status" value="1"/>
</dbReference>
<dbReference type="Gene3D" id="1.10.8.70">
    <property type="entry name" value="Glutamate-tRNA synthetase, class I, anticodon-binding domain 1"/>
    <property type="match status" value="1"/>
</dbReference>
<dbReference type="Gene3D" id="1.10.1160.10">
    <property type="entry name" value="Glutamyl-trna Synthetase, Domain 2"/>
    <property type="match status" value="1"/>
</dbReference>
<dbReference type="Gene3D" id="3.90.800.10">
    <property type="entry name" value="Glutamyl-tRNA Synthetase, Domain 3"/>
    <property type="match status" value="1"/>
</dbReference>
<dbReference type="Gene3D" id="3.40.50.620">
    <property type="entry name" value="HUPs"/>
    <property type="match status" value="1"/>
</dbReference>
<dbReference type="HAMAP" id="MF_00022">
    <property type="entry name" value="Glu_tRNA_synth_type1"/>
    <property type="match status" value="1"/>
</dbReference>
<dbReference type="InterPro" id="IPR045462">
    <property type="entry name" value="aa-tRNA-synth_I_cd-bd"/>
</dbReference>
<dbReference type="InterPro" id="IPR020751">
    <property type="entry name" value="aa-tRNA-synth_I_codon-bd_sub2"/>
</dbReference>
<dbReference type="InterPro" id="IPR001412">
    <property type="entry name" value="aa-tRNA-synth_I_CS"/>
</dbReference>
<dbReference type="InterPro" id="IPR008925">
    <property type="entry name" value="aa_tRNA-synth_I_cd-bd_sf"/>
</dbReference>
<dbReference type="InterPro" id="IPR004527">
    <property type="entry name" value="Glu-tRNA-ligase_bac/mito"/>
</dbReference>
<dbReference type="InterPro" id="IPR020752">
    <property type="entry name" value="Glu-tRNA-synth_I_codon-bd_sub1"/>
</dbReference>
<dbReference type="InterPro" id="IPR000924">
    <property type="entry name" value="Glu/Gln-tRNA-synth"/>
</dbReference>
<dbReference type="InterPro" id="IPR020058">
    <property type="entry name" value="Glu/Gln-tRNA-synth_Ib_cat-dom"/>
</dbReference>
<dbReference type="InterPro" id="IPR020061">
    <property type="entry name" value="Glu_tRNA_lig_a-bdl"/>
</dbReference>
<dbReference type="InterPro" id="IPR049940">
    <property type="entry name" value="GluQ/Sye"/>
</dbReference>
<dbReference type="InterPro" id="IPR033910">
    <property type="entry name" value="GluRS_core"/>
</dbReference>
<dbReference type="InterPro" id="IPR014729">
    <property type="entry name" value="Rossmann-like_a/b/a_fold"/>
</dbReference>
<dbReference type="NCBIfam" id="TIGR00464">
    <property type="entry name" value="gltX_bact"/>
    <property type="match status" value="1"/>
</dbReference>
<dbReference type="PANTHER" id="PTHR43311">
    <property type="entry name" value="GLUTAMATE--TRNA LIGASE"/>
    <property type="match status" value="1"/>
</dbReference>
<dbReference type="PANTHER" id="PTHR43311:SF2">
    <property type="entry name" value="GLUTAMATE--TRNA LIGASE, MITOCHONDRIAL-RELATED"/>
    <property type="match status" value="1"/>
</dbReference>
<dbReference type="Pfam" id="PF19269">
    <property type="entry name" value="Anticodon_2"/>
    <property type="match status" value="1"/>
</dbReference>
<dbReference type="Pfam" id="PF00749">
    <property type="entry name" value="tRNA-synt_1c"/>
    <property type="match status" value="1"/>
</dbReference>
<dbReference type="PRINTS" id="PR00987">
    <property type="entry name" value="TRNASYNTHGLU"/>
</dbReference>
<dbReference type="SUPFAM" id="SSF48163">
    <property type="entry name" value="An anticodon-binding domain of class I aminoacyl-tRNA synthetases"/>
    <property type="match status" value="1"/>
</dbReference>
<dbReference type="SUPFAM" id="SSF52374">
    <property type="entry name" value="Nucleotidylyl transferase"/>
    <property type="match status" value="1"/>
</dbReference>
<dbReference type="PROSITE" id="PS00178">
    <property type="entry name" value="AA_TRNA_LIGASE_I"/>
    <property type="match status" value="1"/>
</dbReference>
<proteinExistence type="inferred from homology"/>
<gene>
    <name evidence="1" type="primary">gltX</name>
    <name type="ordered locus">PMT9312_0473</name>
</gene>
<reference key="1">
    <citation type="journal article" date="2006" name="Science">
        <title>Genomic islands and the ecology and evolution of Prochlorococcus.</title>
        <authorList>
            <person name="Coleman M.L."/>
            <person name="Sullivan M.B."/>
            <person name="Martiny A.C."/>
            <person name="Steglich C."/>
            <person name="Barry K."/>
            <person name="Delong E.F."/>
            <person name="Chisholm S.W."/>
        </authorList>
    </citation>
    <scope>NUCLEOTIDE SEQUENCE [LARGE SCALE GENOMIC DNA]</scope>
    <source>
        <strain>MIT 9312</strain>
    </source>
</reference>
<name>SYE_PROM9</name>
<sequence length="479" mass="55167">MEIRLRLAPSPTGLFHIGTARTALFNWLYAQKIGGKFLIRIEDTDFLRSKSEYTKNILDGLKWLGLQWNEEPVKQSDRISIHKKYIKKLLECGAAYRCFTTEDEISELREEQKKKGLPPKHDNRHRNLSKEEIETFISQGRTSVIRFKIDEEIQIKWIDQIRGEIKWQGKDLGGDLVLSRRAMGYEIGDPLYNLAVVVDDNFMNITHVVRGEDHISNTAKQILIYEALDFKLPTFSHTPLILNNEGKKLSKRDCVTSIDEFRDMGYLPEALSNYMAFLGWSPKSATSEILSLDEISKIFELSDINKAGAKFSWEKLNWINSQYIKNMETVKLSETIGKYWDNMGWDPPSQEWAIKLAILIKDSMTLLKDAIDQSKPFFLLPPIQKEGKDFLESNDGKTSLKLILNYLIEQNTGKVDKDKAKEIINEISKMHNVKKGILMKSLRVAFFGSLSGPDLIQSWELFSESKSDISRIERCLKSI</sequence>
<evidence type="ECO:0000255" key="1">
    <source>
        <dbReference type="HAMAP-Rule" id="MF_00022"/>
    </source>
</evidence>
<organism>
    <name type="scientific">Prochlorococcus marinus (strain MIT 9312)</name>
    <dbReference type="NCBI Taxonomy" id="74546"/>
    <lineage>
        <taxon>Bacteria</taxon>
        <taxon>Bacillati</taxon>
        <taxon>Cyanobacteriota</taxon>
        <taxon>Cyanophyceae</taxon>
        <taxon>Synechococcales</taxon>
        <taxon>Prochlorococcaceae</taxon>
        <taxon>Prochlorococcus</taxon>
    </lineage>
</organism>
<accession>Q31C61</accession>
<comment type="function">
    <text evidence="1">Catalyzes the attachment of glutamate to tRNA(Glu) in a two-step reaction: glutamate is first activated by ATP to form Glu-AMP and then transferred to the acceptor end of tRNA(Glu).</text>
</comment>
<comment type="catalytic activity">
    <reaction evidence="1">
        <text>tRNA(Glu) + L-glutamate + ATP = L-glutamyl-tRNA(Glu) + AMP + diphosphate</text>
        <dbReference type="Rhea" id="RHEA:23540"/>
        <dbReference type="Rhea" id="RHEA-COMP:9663"/>
        <dbReference type="Rhea" id="RHEA-COMP:9680"/>
        <dbReference type="ChEBI" id="CHEBI:29985"/>
        <dbReference type="ChEBI" id="CHEBI:30616"/>
        <dbReference type="ChEBI" id="CHEBI:33019"/>
        <dbReference type="ChEBI" id="CHEBI:78442"/>
        <dbReference type="ChEBI" id="CHEBI:78520"/>
        <dbReference type="ChEBI" id="CHEBI:456215"/>
        <dbReference type="EC" id="6.1.1.17"/>
    </reaction>
</comment>
<comment type="subunit">
    <text evidence="1">Monomer.</text>
</comment>
<comment type="subcellular location">
    <subcellularLocation>
        <location evidence="1">Cytoplasm</location>
    </subcellularLocation>
</comment>
<comment type="similarity">
    <text evidence="1">Belongs to the class-I aminoacyl-tRNA synthetase family. Glutamate--tRNA ligase type 1 subfamily.</text>
</comment>